<feature type="chain" id="PRO_0000172419" description="Large ribosomal subunit protein bL32">
    <location>
        <begin position="1"/>
        <end position="60"/>
    </location>
</feature>
<feature type="region of interest" description="Disordered" evidence="2">
    <location>
        <begin position="1"/>
        <end position="22"/>
    </location>
</feature>
<feature type="compositionally biased region" description="Basic residues" evidence="2">
    <location>
        <begin position="7"/>
        <end position="20"/>
    </location>
</feature>
<sequence>MAVPARHTSKAKKNKRRTHYKLTAPSVQFDETTGDYSRSHRVSLKGYYKGRKIAKANEAK</sequence>
<accession>Q5X9E4</accession>
<dbReference type="EMBL" id="CP000003">
    <property type="protein sequence ID" value="AAT87969.1"/>
    <property type="molecule type" value="Genomic_DNA"/>
</dbReference>
<dbReference type="RefSeq" id="WP_000290414.1">
    <property type="nucleotide sequence ID" value="NC_006086.1"/>
</dbReference>
<dbReference type="SMR" id="Q5X9E4"/>
<dbReference type="GeneID" id="83689722"/>
<dbReference type="KEGG" id="spa:M6_Spy1834"/>
<dbReference type="HOGENOM" id="CLU_129084_2_3_9"/>
<dbReference type="Proteomes" id="UP000001167">
    <property type="component" value="Chromosome"/>
</dbReference>
<dbReference type="GO" id="GO:0015934">
    <property type="term" value="C:large ribosomal subunit"/>
    <property type="evidence" value="ECO:0007669"/>
    <property type="project" value="InterPro"/>
</dbReference>
<dbReference type="GO" id="GO:0003735">
    <property type="term" value="F:structural constituent of ribosome"/>
    <property type="evidence" value="ECO:0007669"/>
    <property type="project" value="InterPro"/>
</dbReference>
<dbReference type="GO" id="GO:0006412">
    <property type="term" value="P:translation"/>
    <property type="evidence" value="ECO:0007669"/>
    <property type="project" value="UniProtKB-UniRule"/>
</dbReference>
<dbReference type="HAMAP" id="MF_00340">
    <property type="entry name" value="Ribosomal_bL32"/>
    <property type="match status" value="1"/>
</dbReference>
<dbReference type="InterPro" id="IPR002677">
    <property type="entry name" value="Ribosomal_bL32"/>
</dbReference>
<dbReference type="InterPro" id="IPR044957">
    <property type="entry name" value="Ribosomal_bL32_bact"/>
</dbReference>
<dbReference type="InterPro" id="IPR011332">
    <property type="entry name" value="Ribosomal_zn-bd"/>
</dbReference>
<dbReference type="NCBIfam" id="TIGR01031">
    <property type="entry name" value="rpmF_bact"/>
    <property type="match status" value="1"/>
</dbReference>
<dbReference type="PANTHER" id="PTHR35534">
    <property type="entry name" value="50S RIBOSOMAL PROTEIN L32"/>
    <property type="match status" value="1"/>
</dbReference>
<dbReference type="PANTHER" id="PTHR35534:SF1">
    <property type="entry name" value="LARGE RIBOSOMAL SUBUNIT PROTEIN BL32"/>
    <property type="match status" value="1"/>
</dbReference>
<dbReference type="Pfam" id="PF01783">
    <property type="entry name" value="Ribosomal_L32p"/>
    <property type="match status" value="1"/>
</dbReference>
<dbReference type="SUPFAM" id="SSF57829">
    <property type="entry name" value="Zn-binding ribosomal proteins"/>
    <property type="match status" value="1"/>
</dbReference>
<reference key="1">
    <citation type="journal article" date="2004" name="J. Infect. Dis.">
        <title>Progress toward characterization of the group A Streptococcus metagenome: complete genome sequence of a macrolide-resistant serotype M6 strain.</title>
        <authorList>
            <person name="Banks D.J."/>
            <person name="Porcella S.F."/>
            <person name="Barbian K.D."/>
            <person name="Beres S.B."/>
            <person name="Philips L.E."/>
            <person name="Voyich J.M."/>
            <person name="DeLeo F.R."/>
            <person name="Martin J.M."/>
            <person name="Somerville G.A."/>
            <person name="Musser J.M."/>
        </authorList>
    </citation>
    <scope>NUCLEOTIDE SEQUENCE [LARGE SCALE GENOMIC DNA]</scope>
    <source>
        <strain>ATCC BAA-946 / MGAS10394</strain>
    </source>
</reference>
<organism>
    <name type="scientific">Streptococcus pyogenes serotype M6 (strain ATCC BAA-946 / MGAS10394)</name>
    <dbReference type="NCBI Taxonomy" id="286636"/>
    <lineage>
        <taxon>Bacteria</taxon>
        <taxon>Bacillati</taxon>
        <taxon>Bacillota</taxon>
        <taxon>Bacilli</taxon>
        <taxon>Lactobacillales</taxon>
        <taxon>Streptococcaceae</taxon>
        <taxon>Streptococcus</taxon>
    </lineage>
</organism>
<keyword id="KW-0687">Ribonucleoprotein</keyword>
<keyword id="KW-0689">Ribosomal protein</keyword>
<protein>
    <recommendedName>
        <fullName evidence="1">Large ribosomal subunit protein bL32</fullName>
    </recommendedName>
    <alternativeName>
        <fullName evidence="3">50S ribosomal protein L32</fullName>
    </alternativeName>
</protein>
<proteinExistence type="inferred from homology"/>
<name>RL32_STRP6</name>
<gene>
    <name evidence="1" type="primary">rpmF</name>
    <name type="ordered locus">M6_Spy1834</name>
</gene>
<comment type="similarity">
    <text evidence="1">Belongs to the bacterial ribosomal protein bL32 family.</text>
</comment>
<evidence type="ECO:0000255" key="1">
    <source>
        <dbReference type="HAMAP-Rule" id="MF_00340"/>
    </source>
</evidence>
<evidence type="ECO:0000256" key="2">
    <source>
        <dbReference type="SAM" id="MobiDB-lite"/>
    </source>
</evidence>
<evidence type="ECO:0000305" key="3"/>